<organism evidence="9">
    <name type="scientific">Plasmodium falciparum (isolate 3D7)</name>
    <dbReference type="NCBI Taxonomy" id="36329"/>
    <lineage>
        <taxon>Eukaryota</taxon>
        <taxon>Sar</taxon>
        <taxon>Alveolata</taxon>
        <taxon>Apicomplexa</taxon>
        <taxon>Aconoidasida</taxon>
        <taxon>Haemosporida</taxon>
        <taxon>Plasmodiidae</taxon>
        <taxon>Plasmodium</taxon>
        <taxon>Plasmodium (Laverania)</taxon>
    </lineage>
</organism>
<evidence type="ECO:0000250" key="1">
    <source>
        <dbReference type="UniProtKB" id="P67812"/>
    </source>
</evidence>
<evidence type="ECO:0000250" key="2">
    <source>
        <dbReference type="UniProtKB" id="Q04969"/>
    </source>
</evidence>
<evidence type="ECO:0000255" key="3"/>
<evidence type="ECO:0000269" key="4">
    <source>
    </source>
</evidence>
<evidence type="ECO:0000269" key="5">
    <source>
    </source>
</evidence>
<evidence type="ECO:0000303" key="6">
    <source>
    </source>
</evidence>
<evidence type="ECO:0000305" key="7"/>
<evidence type="ECO:0000312" key="8">
    <source>
        <dbReference type="EMBL" id="CAB92303.1"/>
    </source>
</evidence>
<evidence type="ECO:0000312" key="9">
    <source>
        <dbReference type="Proteomes" id="UP000001450"/>
    </source>
</evidence>
<proteinExistence type="evidence at protein level"/>
<protein>
    <recommendedName>
        <fullName evidence="6">Signal peptidase complex subunit 2</fullName>
        <shortName evidence="6">PfSPC25</shortName>
    </recommendedName>
</protein>
<sequence length="179" mass="21012">MSGNNVQEEDSTFHVSNLYSETEIKKITQDFISEKIREQNFEEIVKYSNIRIFLSLVLIVIGTYCSIFVQYKKNPVIMIQLLVAFFVVSTTLIIFEYFFFDDVFMILRSNNGSLVKLYCRLDVKKSTLILAYKLNKNVFETSFELKRLYNENGYLMKPYAKNVVMNFLSAHGRTLKLKN</sequence>
<accession>Q9NFA0</accession>
<comment type="function">
    <text evidence="2 5">Component of the signal peptidase complex (SPC) which catalyzes the cleavage of N-terminal signal sequences from nascent proteins as they are translocated into the lumen of the endoplasmic reticulum (PubMed:30127496). Enhances the enzymatic activity of SPC and facilitates the interactions between different components of the translocation site (By similarity). Also, regulatory component of the CSP25-plasmepsin PMV complex which cleaves the pentameric localization motif RxLxE/Q/D (termed Plasmodium export element (PEXEL)) located downstream of the N-terminal secretory signal sequence of several proteins (PubMed:30127496).</text>
</comment>
<comment type="subunit">
    <text evidence="1 5">Component of the signal peptidase complex (SPC) composed of a catalytic subunit SEC11/SPC21 and three accessory subunits SPC25, SPC3/SPC22, SPC1/SPC12 (PubMed:30127496). The complex induces a local thinning of the ER membrane which is used to measure the length of the signal peptide (SP) h-region of protein substrates (By similarity). This ensures the selectivity of the complex towards h-regions shorter than 18-20 amino acids (By similarity). Within the complex, interacts with SEC11/SPC21 (PubMed:30127496). Component of a complex composed of SPC25 and PMV; the interaction is mediated via the transmembrane domains (PubMed:30127496). The complex interacts with the SEC61 channel-forming translocon complex and is involved in the recognition and import of PEXEL motif-containing proteins into the ER for subsequent export (PubMed:30127496).</text>
</comment>
<comment type="subcellular location">
    <subcellularLocation>
        <location evidence="4">Endoplasmic reticulum membrane</location>
        <topology evidence="3">Multi-pass membrane protein</topology>
    </subcellularLocation>
    <text evidence="5">Partially colocalizes with plasmepsin PMV in the endoplasmic reticulum (PubMed:30127496). Partially colocalizes with SEC11/SPC21 in the endoplasmic reticulum (PubMed:30127496).</text>
</comment>
<comment type="developmental stage">
    <text evidence="5">Expressed during the asexual blood stage; expression is low at the ring stage and then increases through the trophozoite and schizont stages (at protein level).</text>
</comment>
<comment type="disruption phenotype">
    <text evidence="5">Causes a severe growth defect in host erythrocytes (PubMed:30127496). Export of protein containing a PEXEL motif, including PIESP2, PTP3 and PTP2 is severely reduced at the ring and trophozoite stages (PubMed:30127496). Similarly, export of RESA is reduced at the schizont stage (PubMed:30127496).</text>
</comment>
<comment type="similarity">
    <text evidence="7">Belongs to the SPCS2 family.</text>
</comment>
<reference evidence="9" key="1">
    <citation type="journal article" date="1999" name="Nature">
        <title>The complete nucleotide sequence of chromosome 3 of Plasmodium falciparum.</title>
        <authorList>
            <person name="Bowman S."/>
            <person name="Lawson D."/>
            <person name="Basham D."/>
            <person name="Brown D."/>
            <person name="Chillingworth T."/>
            <person name="Churcher C.M."/>
            <person name="Craig A."/>
            <person name="Davies R.M."/>
            <person name="Devlin K."/>
            <person name="Feltwell T."/>
            <person name="Gentles S."/>
            <person name="Gwilliam R."/>
            <person name="Hamlin N."/>
            <person name="Harris D."/>
            <person name="Holroyd S."/>
            <person name="Hornsby T."/>
            <person name="Horrocks P."/>
            <person name="Jagels K."/>
            <person name="Jassal B."/>
            <person name="Kyes S."/>
            <person name="McLean J."/>
            <person name="Moule S."/>
            <person name="Mungall K.L."/>
            <person name="Murphy L."/>
            <person name="Oliver K."/>
            <person name="Quail M.A."/>
            <person name="Rajandream M.A."/>
            <person name="Rutter S."/>
            <person name="Skelton J."/>
            <person name="Squares R."/>
            <person name="Squares S."/>
            <person name="Sulston J.E."/>
            <person name="Whitehead S."/>
            <person name="Woodward J.R."/>
            <person name="Newbold C."/>
            <person name="Barrell B.G."/>
        </authorList>
    </citation>
    <scope>NUCLEOTIDE SEQUENCE [LARGE SCALE GENOMIC DNA]</scope>
    <source>
        <strain evidence="9">3D7</strain>
    </source>
</reference>
<reference evidence="9" key="2">
    <citation type="journal article" date="2002" name="Nature">
        <title>Genome sequence of the human malaria parasite Plasmodium falciparum.</title>
        <authorList>
            <person name="Gardner M.J."/>
            <person name="Hall N."/>
            <person name="Fung E."/>
            <person name="White O."/>
            <person name="Berriman M."/>
            <person name="Hyman R.W."/>
            <person name="Carlton J.M."/>
            <person name="Pain A."/>
            <person name="Nelson K.E."/>
            <person name="Bowman S."/>
            <person name="Paulsen I.T."/>
            <person name="James K.D."/>
            <person name="Eisen J.A."/>
            <person name="Rutherford K.M."/>
            <person name="Salzberg S.L."/>
            <person name="Craig A."/>
            <person name="Kyes S."/>
            <person name="Chan M.-S."/>
            <person name="Nene V."/>
            <person name="Shallom S.J."/>
            <person name="Suh B."/>
            <person name="Peterson J."/>
            <person name="Angiuoli S."/>
            <person name="Pertea M."/>
            <person name="Allen J."/>
            <person name="Selengut J."/>
            <person name="Haft D."/>
            <person name="Mather M.W."/>
            <person name="Vaidya A.B."/>
            <person name="Martin D.M.A."/>
            <person name="Fairlamb A.H."/>
            <person name="Fraunholz M.J."/>
            <person name="Roos D.S."/>
            <person name="Ralph S.A."/>
            <person name="McFadden G.I."/>
            <person name="Cummings L.M."/>
            <person name="Subramanian G.M."/>
            <person name="Mungall C."/>
            <person name="Venter J.C."/>
            <person name="Carucci D.J."/>
            <person name="Hoffman S.L."/>
            <person name="Newbold C."/>
            <person name="Davis R.W."/>
            <person name="Fraser C.M."/>
            <person name="Barrell B.G."/>
        </authorList>
    </citation>
    <scope>NUCLEOTIDE SEQUENCE [LARGE SCALE GENOMIC DNA]</scope>
    <source>
        <strain evidence="9">3D7</strain>
    </source>
</reference>
<reference evidence="9" key="3">
    <citation type="journal article" date="2002" name="Nature">
        <title>Sequence of Plasmodium falciparum chromosomes 1, 3-9 and 13.</title>
        <authorList>
            <person name="Hall N."/>
            <person name="Pain A."/>
            <person name="Berriman M."/>
            <person name="Churcher C.M."/>
            <person name="Harris B."/>
            <person name="Harris D."/>
            <person name="Mungall K.L."/>
            <person name="Bowman S."/>
            <person name="Atkin R."/>
            <person name="Baker S."/>
            <person name="Barron A."/>
            <person name="Brooks K."/>
            <person name="Buckee C.O."/>
            <person name="Burrows C."/>
            <person name="Cherevach I."/>
            <person name="Chillingworth C."/>
            <person name="Chillingworth T."/>
            <person name="Christodoulou Z."/>
            <person name="Clark L."/>
            <person name="Clark R."/>
            <person name="Corton C."/>
            <person name="Cronin A."/>
            <person name="Davies R.M."/>
            <person name="Davis P."/>
            <person name="Dear P."/>
            <person name="Dearden F."/>
            <person name="Doggett J."/>
            <person name="Feltwell T."/>
            <person name="Goble A."/>
            <person name="Goodhead I."/>
            <person name="Gwilliam R."/>
            <person name="Hamlin N."/>
            <person name="Hance Z."/>
            <person name="Harper D."/>
            <person name="Hauser H."/>
            <person name="Hornsby T."/>
            <person name="Holroyd S."/>
            <person name="Horrocks P."/>
            <person name="Humphray S."/>
            <person name="Jagels K."/>
            <person name="James K.D."/>
            <person name="Johnson D."/>
            <person name="Kerhornou A."/>
            <person name="Knights A."/>
            <person name="Konfortov B."/>
            <person name="Kyes S."/>
            <person name="Larke N."/>
            <person name="Lawson D."/>
            <person name="Lennard N."/>
            <person name="Line A."/>
            <person name="Maddison M."/>
            <person name="Mclean J."/>
            <person name="Mooney P."/>
            <person name="Moule S."/>
            <person name="Murphy L."/>
            <person name="Oliver K."/>
            <person name="Ormond D."/>
            <person name="Price C."/>
            <person name="Quail M.A."/>
            <person name="Rabbinowitsch E."/>
            <person name="Rajandream M.A."/>
            <person name="Rutter S."/>
            <person name="Rutherford K.M."/>
            <person name="Sanders M."/>
            <person name="Simmonds M."/>
            <person name="Seeger K."/>
            <person name="Sharp S."/>
            <person name="Smith R."/>
            <person name="Squares R."/>
            <person name="Squares S."/>
            <person name="Stevens K."/>
            <person name="Taylor K."/>
            <person name="Tivey A."/>
            <person name="Unwin L."/>
            <person name="Whitehead S."/>
            <person name="Woodward J.R."/>
            <person name="Sulston J.E."/>
            <person name="Craig A."/>
            <person name="Newbold C."/>
            <person name="Barrell B.G."/>
        </authorList>
    </citation>
    <scope>NUCLEOTIDE SEQUENCE [LARGE SCALE GENOMIC DNA]</scope>
    <source>
        <strain evidence="9">3D7</strain>
    </source>
</reference>
<reference evidence="7" key="4">
    <citation type="journal article" date="2018" name="Nat. Microbiol.">
        <title>Plasmepsin V cleaves malaria effector proteins in a distinct endoplasmic reticulum translocation interactome for export to the erythrocyte.</title>
        <authorList>
            <person name="Marapana D.S."/>
            <person name="Dagley L.F."/>
            <person name="Sandow J.J."/>
            <person name="Nebl T."/>
            <person name="Triglia T."/>
            <person name="Pasternak M."/>
            <person name="Dickerman B.K."/>
            <person name="Crabb B.S."/>
            <person name="Gilson P.R."/>
            <person name="Webb A.I."/>
            <person name="Boddey J.A."/>
            <person name="Cowman A.F."/>
        </authorList>
    </citation>
    <scope>FUNCTION</scope>
    <scope>IDENTIFICATION IN THE SIGNAL PEPTIDASE COMPLEX</scope>
    <scope>IDENTIFICATION IN A COMPLEX WITH PMV</scope>
    <scope>INTERACTION WITH PMV AND SEC11</scope>
    <scope>SUBCELLULAR LOCATION</scope>
    <scope>DEVELOPMENTAL STAGE</scope>
    <scope>DISRUPTION PHENOTYPE</scope>
</reference>
<keyword id="KW-0256">Endoplasmic reticulum</keyword>
<keyword id="KW-0472">Membrane</keyword>
<keyword id="KW-1185">Reference proteome</keyword>
<keyword id="KW-0812">Transmembrane</keyword>
<keyword id="KW-1133">Transmembrane helix</keyword>
<gene>
    <name evidence="6" type="primary">SPC25</name>
    <name evidence="8" type="ORF">PF3D7_0320700</name>
</gene>
<name>SPCS2_PLAF7</name>
<feature type="chain" id="PRO_0000453951" description="Signal peptidase complex subunit 2">
    <location>
        <begin position="1"/>
        <end position="179"/>
    </location>
</feature>
<feature type="topological domain" description="Cytoplasmic" evidence="7">
    <location>
        <begin position="1"/>
        <end position="48"/>
    </location>
</feature>
<feature type="transmembrane region" description="Helical" evidence="3">
    <location>
        <begin position="49"/>
        <end position="69"/>
    </location>
</feature>
<feature type="topological domain" description="Extracellular" evidence="7">
    <location>
        <begin position="70"/>
        <end position="74"/>
    </location>
</feature>
<feature type="transmembrane region" description="Helical" evidence="3">
    <location>
        <begin position="75"/>
        <end position="95"/>
    </location>
</feature>
<feature type="topological domain" description="Cytoplasmic" evidence="7">
    <location>
        <begin position="96"/>
        <end position="179"/>
    </location>
</feature>
<dbReference type="EMBL" id="AL844502">
    <property type="protein sequence ID" value="CAB92303.1"/>
    <property type="molecule type" value="Genomic_DNA"/>
</dbReference>
<dbReference type="RefSeq" id="XP_001351277.1">
    <property type="nucleotide sequence ID" value="XM_001351241.1"/>
</dbReference>
<dbReference type="STRING" id="36329.Q9NFA0"/>
<dbReference type="SwissPalm" id="Q9NFA0"/>
<dbReference type="PaxDb" id="5833-PFC0912w"/>
<dbReference type="EnsemblProtists" id="CAB92303">
    <property type="protein sequence ID" value="CAB92303"/>
    <property type="gene ID" value="PF3D7_0320700"/>
</dbReference>
<dbReference type="GeneID" id="814521"/>
<dbReference type="KEGG" id="pfa:PF3D7_0320700"/>
<dbReference type="VEuPathDB" id="PlasmoDB:PF3D7_0320700"/>
<dbReference type="HOGENOM" id="CLU_1477887_0_0_1"/>
<dbReference type="InParanoid" id="Q9NFA0"/>
<dbReference type="OMA" id="FFEDIFM"/>
<dbReference type="OrthoDB" id="330185at2759"/>
<dbReference type="PhylomeDB" id="Q9NFA0"/>
<dbReference type="Proteomes" id="UP000001450">
    <property type="component" value="Chromosome 3"/>
</dbReference>
<dbReference type="GO" id="GO:0005783">
    <property type="term" value="C:endoplasmic reticulum"/>
    <property type="evidence" value="ECO:0000314"/>
    <property type="project" value="GeneDB"/>
</dbReference>
<dbReference type="GO" id="GO:0005787">
    <property type="term" value="C:signal peptidase complex"/>
    <property type="evidence" value="ECO:0000314"/>
    <property type="project" value="GeneDB"/>
</dbReference>
<dbReference type="GO" id="GO:0004175">
    <property type="term" value="F:endopeptidase activity"/>
    <property type="evidence" value="ECO:0000314"/>
    <property type="project" value="GeneDB"/>
</dbReference>
<dbReference type="GO" id="GO:0015031">
    <property type="term" value="P:protein transport"/>
    <property type="evidence" value="ECO:0000304"/>
    <property type="project" value="GeneDB"/>
</dbReference>
<dbReference type="GO" id="GO:0006465">
    <property type="term" value="P:signal peptide processing"/>
    <property type="evidence" value="ECO:0000304"/>
    <property type="project" value="GeneDB"/>
</dbReference>
<dbReference type="InterPro" id="IPR009582">
    <property type="entry name" value="Spc2/SPCS2"/>
</dbReference>
<dbReference type="Pfam" id="PF06703">
    <property type="entry name" value="SPC25"/>
    <property type="match status" value="1"/>
</dbReference>